<feature type="chain" id="PRO_0000131774" description="Protein translocase subunit SecY">
    <location>
        <begin position="1"/>
        <end position="492"/>
    </location>
</feature>
<feature type="transmembrane region" description="Helical" evidence="2">
    <location>
        <begin position="1"/>
        <end position="21"/>
    </location>
</feature>
<feature type="transmembrane region" description="Helical" evidence="2">
    <location>
        <begin position="54"/>
        <end position="74"/>
    </location>
</feature>
<feature type="transmembrane region" description="Helical" evidence="2">
    <location>
        <begin position="96"/>
        <end position="116"/>
    </location>
</feature>
<feature type="transmembrane region" description="Helical" evidence="2">
    <location>
        <begin position="159"/>
        <end position="179"/>
    </location>
</feature>
<feature type="transmembrane region" description="Helical" evidence="2">
    <location>
        <begin position="183"/>
        <end position="203"/>
    </location>
</feature>
<feature type="transmembrane region" description="Helical" evidence="2">
    <location>
        <begin position="206"/>
        <end position="226"/>
    </location>
</feature>
<feature type="transmembrane region" description="Helical" evidence="2">
    <location>
        <begin position="247"/>
        <end position="267"/>
    </location>
</feature>
<feature type="transmembrane region" description="Helical" evidence="2">
    <location>
        <begin position="303"/>
        <end position="323"/>
    </location>
</feature>
<feature type="transmembrane region" description="Helical" evidence="2">
    <location>
        <begin position="357"/>
        <end position="377"/>
    </location>
</feature>
<feature type="transmembrane region" description="Helical" evidence="2">
    <location>
        <begin position="409"/>
        <end position="429"/>
    </location>
</feature>
<feature type="transmembrane region" description="Helical" evidence="2">
    <location>
        <begin position="435"/>
        <end position="455"/>
    </location>
</feature>
<feature type="region of interest" description="Disordered" evidence="3">
    <location>
        <begin position="468"/>
        <end position="492"/>
    </location>
</feature>
<feature type="compositionally biased region" description="Basic and acidic residues" evidence="3">
    <location>
        <begin position="471"/>
        <end position="484"/>
    </location>
</feature>
<dbReference type="EMBL" id="M30487">
    <property type="protein sequence ID" value="AAA63630.1"/>
    <property type="molecule type" value="Genomic_DNA"/>
</dbReference>
<dbReference type="EMBL" id="U30821">
    <property type="protein sequence ID" value="AAA81218.1"/>
    <property type="molecule type" value="Genomic_DNA"/>
</dbReference>
<dbReference type="PIR" id="T06875">
    <property type="entry name" value="T06875"/>
</dbReference>
<dbReference type="RefSeq" id="NP_043187.1">
    <property type="nucleotide sequence ID" value="NC_001675.1"/>
</dbReference>
<dbReference type="TCDB" id="3.A.5.6.1">
    <property type="family name" value="the general secretory pathway (sec) family"/>
</dbReference>
<dbReference type="GeneID" id="801593"/>
<dbReference type="GO" id="GO:0036012">
    <property type="term" value="C:cyanelle inner membrane"/>
    <property type="evidence" value="ECO:0007669"/>
    <property type="project" value="UniProtKB-SubCell"/>
</dbReference>
<dbReference type="GO" id="GO:0033115">
    <property type="term" value="C:cyanelle thylakoid membrane"/>
    <property type="evidence" value="ECO:0000314"/>
    <property type="project" value="UniProtKB"/>
</dbReference>
<dbReference type="GO" id="GO:0015031">
    <property type="term" value="P:protein transport"/>
    <property type="evidence" value="ECO:0007669"/>
    <property type="project" value="UniProtKB-KW"/>
</dbReference>
<dbReference type="FunFam" id="1.10.3370.10:FF:000001">
    <property type="entry name" value="Preprotein translocase subunit SecY"/>
    <property type="match status" value="1"/>
</dbReference>
<dbReference type="Gene3D" id="1.10.3370.10">
    <property type="entry name" value="SecY subunit domain"/>
    <property type="match status" value="1"/>
</dbReference>
<dbReference type="HAMAP" id="MF_01465">
    <property type="entry name" value="SecY"/>
    <property type="match status" value="1"/>
</dbReference>
<dbReference type="InterPro" id="IPR026593">
    <property type="entry name" value="SecY"/>
</dbReference>
<dbReference type="InterPro" id="IPR002208">
    <property type="entry name" value="SecY/SEC61-alpha"/>
</dbReference>
<dbReference type="InterPro" id="IPR030659">
    <property type="entry name" value="SecY_CS"/>
</dbReference>
<dbReference type="InterPro" id="IPR023201">
    <property type="entry name" value="SecY_dom_sf"/>
</dbReference>
<dbReference type="NCBIfam" id="TIGR00967">
    <property type="entry name" value="3a0501s007"/>
    <property type="match status" value="1"/>
</dbReference>
<dbReference type="PANTHER" id="PTHR10906">
    <property type="entry name" value="SECY/SEC61-ALPHA FAMILY MEMBER"/>
    <property type="match status" value="1"/>
</dbReference>
<dbReference type="Pfam" id="PF00344">
    <property type="entry name" value="SecY"/>
    <property type="match status" value="1"/>
</dbReference>
<dbReference type="PIRSF" id="PIRSF004557">
    <property type="entry name" value="SecY"/>
    <property type="match status" value="1"/>
</dbReference>
<dbReference type="PRINTS" id="PR00303">
    <property type="entry name" value="SECYTRNLCASE"/>
</dbReference>
<dbReference type="SUPFAM" id="SSF103491">
    <property type="entry name" value="Preprotein translocase SecY subunit"/>
    <property type="match status" value="1"/>
</dbReference>
<dbReference type="PROSITE" id="PS00755">
    <property type="entry name" value="SECY_1"/>
    <property type="match status" value="1"/>
</dbReference>
<dbReference type="PROSITE" id="PS00756">
    <property type="entry name" value="SECY_2"/>
    <property type="match status" value="1"/>
</dbReference>
<gene>
    <name type="primary">secY</name>
</gene>
<organism>
    <name type="scientific">Cyanophora paradoxa</name>
    <dbReference type="NCBI Taxonomy" id="2762"/>
    <lineage>
        <taxon>Eukaryota</taxon>
        <taxon>Glaucocystophyceae</taxon>
        <taxon>Cyanophoraceae</taxon>
        <taxon>Cyanophora</taxon>
    </lineage>
</organism>
<accession>P25014</accession>
<evidence type="ECO:0000250" key="1"/>
<evidence type="ECO:0000255" key="2"/>
<evidence type="ECO:0000256" key="3">
    <source>
        <dbReference type="SAM" id="MobiDB-lite"/>
    </source>
</evidence>
<evidence type="ECO:0000269" key="4">
    <source>
    </source>
</evidence>
<evidence type="ECO:0000305" key="5"/>
<comment type="function">
    <text evidence="1">The central subunit of the protein translocation channel SecYE. Consists of two halves formed by TMs 1-5 and 6-10. These two domains form a lateral gate at the front which open onto the bilayer between TMs 2 and 7, and are clamped together by SecE at the back. The channel is closed by both a pore ring composed of hydrophobic SecY resides and a short helix (helix 2A) on the extracellular side of the membrane which forms a plug (By similarity).</text>
</comment>
<comment type="subunit">
    <text evidence="1">Component of the Sec protein translocase complex, which is composed of at least SecY and SecE.</text>
</comment>
<comment type="subcellular location">
    <subcellularLocation>
        <location evidence="4">Plastid</location>
        <location evidence="4">Cyanelle thylakoid membrane</location>
        <topology evidence="4">Multi-pass membrane protein</topology>
    </subcellularLocation>
    <subcellularLocation>
        <location evidence="4">Plastid</location>
        <location evidence="4">Cyanelle inner membrane</location>
        <topology evidence="4">Multi-pass membrane protein</topology>
    </subcellularLocation>
</comment>
<comment type="similarity">
    <text evidence="5">Belongs to the SecY/SEC61-alpha family.</text>
</comment>
<proteinExistence type="inferred from homology"/>
<reference key="1">
    <citation type="journal article" date="1990" name="Mol. Gen. Genet.">
        <title>The cyanelle S10 spc ribosomal protein gene operon from Cyanophora paradoxa.</title>
        <authorList>
            <person name="Michalowski C.B."/>
            <person name="Pfanzagl B."/>
            <person name="Loeffelhardt W."/>
            <person name="Bohnert H.J."/>
        </authorList>
    </citation>
    <scope>NUCLEOTIDE SEQUENCE [GENOMIC DNA]</scope>
</reference>
<reference key="2">
    <citation type="journal article" date="1995" name="Plant Mol. Biol. Rep.">
        <title>Nucleotide sequence of the cyanelle DNA from Cyanophora paradoxa.</title>
        <authorList>
            <person name="Stirewalt V.L."/>
            <person name="Michalowski C.B."/>
            <person name="Loeffelhardt W."/>
            <person name="Bohnert H.J."/>
            <person name="Bryant D.A."/>
        </authorList>
    </citation>
    <scope>NUCLEOTIDE SEQUENCE [LARGE SCALE GENOMIC DNA]</scope>
    <source>
        <strain>UTEX LB 555 / Pringsheim</strain>
    </source>
</reference>
<reference key="3">
    <citation type="book" date="1997" name="Eukaryotism and symbiosis">
        <title>The complete sequence of the cyanelle genome of Cyanophora paradoxa: the genetic complexity of a primitive plastid.</title>
        <editorList>
            <person name="Schenk H.E.A."/>
            <person name="Herrmann R."/>
            <person name="Jeon K.W."/>
            <person name="Mueller N.E."/>
            <person name="Schwemmler W."/>
        </editorList>
        <authorList>
            <person name="Loeffelhardt W."/>
            <person name="Stirewalt V.L."/>
            <person name="Michalowski C.B."/>
            <person name="Annarella M."/>
            <person name="Farley J.Y."/>
            <person name="Schluchter W.M."/>
            <person name="Chung S."/>
            <person name="Newmann-Spallart C."/>
            <person name="Steiner J.M."/>
            <person name="Jakowitsch J."/>
            <person name="Bohnert H.J."/>
            <person name="Bryant D.A."/>
        </authorList>
    </citation>
    <scope>NUCLEOTIDE SEQUENCE [LARGE SCALE GENOMIC DNA]</scope>
    <source>
        <strain>UTEX LB 555 / Pringsheim</strain>
    </source>
</reference>
<reference key="4">
    <citation type="journal article" date="2008" name="BMC Evol. Biol.">
        <title>Evolutionary conservation of dual Sec translocases in the cyanelles of Cyanophora paradoxa.</title>
        <authorList>
            <person name="Yusa F."/>
            <person name="Steiner J.M."/>
            <person name="Loffelhardt W."/>
        </authorList>
    </citation>
    <scope>SUBCELLULAR LOCATION</scope>
    <source>
        <strain>UTEX LB 555 / Pringsheim</strain>
    </source>
</reference>
<geneLocation type="cyanelle"/>
<sequence length="492" mass="55927">MLSRLIISIFIIFETIYLQIFKPVNKTFKQGEAKLKRTLQTLQSRELSEIRKRAISTLCLIFLIRIGTFLPIPGTALNFDLESFQQNNSRNELANILNLLSGGAFLEIGFFTLGILPYMNASFFLQVLTKILPSLERFQKEQEEIAQREFKKWTRYLTVIWAFIQSIVISWIWIRPYALNWDFFLGLKVVVALTLGAVIVMIIAEQITEIGLTNGSSLLIFINIIARIPNSIEQLFNSNINWTFPMISSLILSLSLSFITMFVIIGLQESGRPVPVLIARQEAERQKFNEPITEAERRKTQAYIFFQLLPAGIMPVIFASTIFDLALPAFTNFLLQQGNWGYQLIKSFPFNSLFKDFCYLITIMLFSSNYALTIMINPKTLAENLNSMNALIPGVRPGSETKVYSEQLIHRLNFIGSFVLALVCILPSIVERSLGLPKLQILSPVSISIALGVAVDTTRRITSYLGSSSPFKRDSSKREPLKRDFSKRRSAN</sequence>
<protein>
    <recommendedName>
        <fullName>Protein translocase subunit SecY</fullName>
    </recommendedName>
</protein>
<keyword id="KW-0194">Cyanelle</keyword>
<keyword id="KW-0472">Membrane</keyword>
<keyword id="KW-0934">Plastid</keyword>
<keyword id="KW-1001">Plastid inner membrane</keyword>
<keyword id="KW-0653">Protein transport</keyword>
<keyword id="KW-0793">Thylakoid</keyword>
<keyword id="KW-0811">Translocation</keyword>
<keyword id="KW-0812">Transmembrane</keyword>
<keyword id="KW-1133">Transmembrane helix</keyword>
<keyword id="KW-0813">Transport</keyword>
<name>SECY_CYAPA</name>